<proteinExistence type="inferred from homology"/>
<feature type="chain" id="PRO_1000001175" description="Ribosome maturation factor RimM">
    <location>
        <begin position="1"/>
        <end position="169"/>
    </location>
</feature>
<feature type="domain" description="PRC barrel" evidence="1">
    <location>
        <begin position="97"/>
        <end position="169"/>
    </location>
</feature>
<sequence>MSQDFVEIAKIGATYKLNGELNLYPLANSIETLLSYGDWYIQLPATNVWQQLKGESVLKRADKVYIKLANINNADTAKKYVNALIGVPKRALPQLAEDEVYFKDLIGCSVKNINNDSFGVVVDIIETGANEVLVCKEDNSEYLIPYVKQYIVSEDLNSKKIVVDWEYDY</sequence>
<name>RIMM_FRATO</name>
<gene>
    <name evidence="1" type="primary">rimM</name>
    <name type="ordered locus">FTH_1676</name>
</gene>
<keyword id="KW-0143">Chaperone</keyword>
<keyword id="KW-0963">Cytoplasm</keyword>
<keyword id="KW-0690">Ribosome biogenesis</keyword>
<keyword id="KW-0698">rRNA processing</keyword>
<evidence type="ECO:0000255" key="1">
    <source>
        <dbReference type="HAMAP-Rule" id="MF_00014"/>
    </source>
</evidence>
<comment type="function">
    <text evidence="1">An accessory protein needed during the final step in the assembly of 30S ribosomal subunit, possibly for assembly of the head region. Essential for efficient processing of 16S rRNA. May be needed both before and after RbfA during the maturation of 16S rRNA. It has affinity for free ribosomal 30S subunits but not for 70S ribosomes.</text>
</comment>
<comment type="subunit">
    <text evidence="1">Binds ribosomal protein uS19.</text>
</comment>
<comment type="subcellular location">
    <subcellularLocation>
        <location evidence="1">Cytoplasm</location>
    </subcellularLocation>
</comment>
<comment type="domain">
    <text evidence="1">The PRC barrel domain binds ribosomal protein uS19.</text>
</comment>
<comment type="similarity">
    <text evidence="1">Belongs to the RimM family.</text>
</comment>
<organism>
    <name type="scientific">Francisella tularensis subsp. holarctica (strain OSU18)</name>
    <dbReference type="NCBI Taxonomy" id="393011"/>
    <lineage>
        <taxon>Bacteria</taxon>
        <taxon>Pseudomonadati</taxon>
        <taxon>Pseudomonadota</taxon>
        <taxon>Gammaproteobacteria</taxon>
        <taxon>Thiotrichales</taxon>
        <taxon>Francisellaceae</taxon>
        <taxon>Francisella</taxon>
    </lineage>
</organism>
<dbReference type="EMBL" id="CP000437">
    <property type="protein sequence ID" value="ABI83452.1"/>
    <property type="molecule type" value="Genomic_DNA"/>
</dbReference>
<dbReference type="RefSeq" id="WP_003017214.1">
    <property type="nucleotide sequence ID" value="NC_017463.1"/>
</dbReference>
<dbReference type="SMR" id="Q0BKD2"/>
<dbReference type="KEGG" id="fth:FTH_1676"/>
<dbReference type="GO" id="GO:0005737">
    <property type="term" value="C:cytoplasm"/>
    <property type="evidence" value="ECO:0007669"/>
    <property type="project" value="UniProtKB-SubCell"/>
</dbReference>
<dbReference type="GO" id="GO:0005840">
    <property type="term" value="C:ribosome"/>
    <property type="evidence" value="ECO:0007669"/>
    <property type="project" value="InterPro"/>
</dbReference>
<dbReference type="GO" id="GO:0043022">
    <property type="term" value="F:ribosome binding"/>
    <property type="evidence" value="ECO:0007669"/>
    <property type="project" value="InterPro"/>
</dbReference>
<dbReference type="GO" id="GO:0042274">
    <property type="term" value="P:ribosomal small subunit biogenesis"/>
    <property type="evidence" value="ECO:0007669"/>
    <property type="project" value="UniProtKB-UniRule"/>
</dbReference>
<dbReference type="GO" id="GO:0006364">
    <property type="term" value="P:rRNA processing"/>
    <property type="evidence" value="ECO:0007669"/>
    <property type="project" value="UniProtKB-UniRule"/>
</dbReference>
<dbReference type="Gene3D" id="2.30.30.240">
    <property type="entry name" value="PRC-barrel domain"/>
    <property type="match status" value="1"/>
</dbReference>
<dbReference type="Gene3D" id="2.40.30.60">
    <property type="entry name" value="RimM"/>
    <property type="match status" value="1"/>
</dbReference>
<dbReference type="HAMAP" id="MF_00014">
    <property type="entry name" value="Ribosome_mat_RimM"/>
    <property type="match status" value="1"/>
</dbReference>
<dbReference type="InterPro" id="IPR011033">
    <property type="entry name" value="PRC_barrel-like_sf"/>
</dbReference>
<dbReference type="InterPro" id="IPR056792">
    <property type="entry name" value="PRC_RimM"/>
</dbReference>
<dbReference type="InterPro" id="IPR011961">
    <property type="entry name" value="RimM"/>
</dbReference>
<dbReference type="InterPro" id="IPR002676">
    <property type="entry name" value="RimM_N"/>
</dbReference>
<dbReference type="InterPro" id="IPR036976">
    <property type="entry name" value="RimM_N_sf"/>
</dbReference>
<dbReference type="InterPro" id="IPR009000">
    <property type="entry name" value="Transl_B-barrel_sf"/>
</dbReference>
<dbReference type="NCBIfam" id="TIGR02273">
    <property type="entry name" value="16S_RimM"/>
    <property type="match status" value="1"/>
</dbReference>
<dbReference type="NCBIfam" id="NF011185">
    <property type="entry name" value="PRK14591.1"/>
    <property type="match status" value="1"/>
</dbReference>
<dbReference type="PANTHER" id="PTHR33692">
    <property type="entry name" value="RIBOSOME MATURATION FACTOR RIMM"/>
    <property type="match status" value="1"/>
</dbReference>
<dbReference type="PANTHER" id="PTHR33692:SF1">
    <property type="entry name" value="RIBOSOME MATURATION FACTOR RIMM"/>
    <property type="match status" value="1"/>
</dbReference>
<dbReference type="Pfam" id="PF24986">
    <property type="entry name" value="PRC_RimM"/>
    <property type="match status" value="1"/>
</dbReference>
<dbReference type="Pfam" id="PF01782">
    <property type="entry name" value="RimM"/>
    <property type="match status" value="1"/>
</dbReference>
<dbReference type="SUPFAM" id="SSF50346">
    <property type="entry name" value="PRC-barrel domain"/>
    <property type="match status" value="1"/>
</dbReference>
<dbReference type="SUPFAM" id="SSF50447">
    <property type="entry name" value="Translation proteins"/>
    <property type="match status" value="1"/>
</dbReference>
<protein>
    <recommendedName>
        <fullName evidence="1">Ribosome maturation factor RimM</fullName>
    </recommendedName>
</protein>
<reference key="1">
    <citation type="journal article" date="2006" name="J. Bacteriol.">
        <title>Chromosome rearrangement and diversification of Francisella tularensis revealed by the type B (OSU18) genome sequence.</title>
        <authorList>
            <person name="Petrosino J.F."/>
            <person name="Xiang Q."/>
            <person name="Karpathy S.E."/>
            <person name="Jiang H."/>
            <person name="Yerrapragada S."/>
            <person name="Liu Y."/>
            <person name="Gioia J."/>
            <person name="Hemphill L."/>
            <person name="Gonzalez A."/>
            <person name="Raghavan T.M."/>
            <person name="Uzman A."/>
            <person name="Fox G.E."/>
            <person name="Highlander S."/>
            <person name="Reichard M."/>
            <person name="Morton R.J."/>
            <person name="Clinkenbeard K.D."/>
            <person name="Weinstock G.M."/>
        </authorList>
    </citation>
    <scope>NUCLEOTIDE SEQUENCE [LARGE SCALE GENOMIC DNA]</scope>
    <source>
        <strain>OSU18</strain>
    </source>
</reference>
<accession>Q0BKD2</accession>